<proteinExistence type="inferred from homology"/>
<feature type="chain" id="PRO_1000000451" description="Argininosuccinate lyase">
    <location>
        <begin position="1"/>
        <end position="458"/>
    </location>
</feature>
<keyword id="KW-0028">Amino-acid biosynthesis</keyword>
<keyword id="KW-0055">Arginine biosynthesis</keyword>
<keyword id="KW-0963">Cytoplasm</keyword>
<keyword id="KW-0456">Lyase</keyword>
<evidence type="ECO:0000255" key="1">
    <source>
        <dbReference type="HAMAP-Rule" id="MF_00006"/>
    </source>
</evidence>
<name>ARLY_BACVZ</name>
<reference key="1">
    <citation type="journal article" date="2007" name="Nat. Biotechnol.">
        <title>Comparative analysis of the complete genome sequence of the plant growth-promoting bacterium Bacillus amyloliquefaciens FZB42.</title>
        <authorList>
            <person name="Chen X.H."/>
            <person name="Koumoutsi A."/>
            <person name="Scholz R."/>
            <person name="Eisenreich A."/>
            <person name="Schneider K."/>
            <person name="Heinemeyer I."/>
            <person name="Morgenstern B."/>
            <person name="Voss B."/>
            <person name="Hess W.R."/>
            <person name="Reva O."/>
            <person name="Junge H."/>
            <person name="Voigt B."/>
            <person name="Jungblut P.R."/>
            <person name="Vater J."/>
            <person name="Suessmuth R."/>
            <person name="Liesegang H."/>
            <person name="Strittmatter A."/>
            <person name="Gottschalk G."/>
            <person name="Borriss R."/>
        </authorList>
    </citation>
    <scope>NUCLEOTIDE SEQUENCE [LARGE SCALE GENOMIC DNA]</scope>
    <source>
        <strain>DSM 23117 / BGSC 10A6 / LMG 26770 / FZB42</strain>
    </source>
</reference>
<dbReference type="EC" id="4.3.2.1" evidence="1"/>
<dbReference type="EMBL" id="CP000560">
    <property type="protein sequence ID" value="ABS74995.1"/>
    <property type="molecule type" value="Genomic_DNA"/>
</dbReference>
<dbReference type="RefSeq" id="WP_003152429.1">
    <property type="nucleotide sequence ID" value="NC_009725.2"/>
</dbReference>
<dbReference type="SMR" id="A7Z7L9"/>
<dbReference type="GeneID" id="93081779"/>
<dbReference type="KEGG" id="bay:RBAM_026370"/>
<dbReference type="HOGENOM" id="CLU_027272_2_3_9"/>
<dbReference type="UniPathway" id="UPA00068">
    <property type="reaction ID" value="UER00114"/>
</dbReference>
<dbReference type="Proteomes" id="UP000001120">
    <property type="component" value="Chromosome"/>
</dbReference>
<dbReference type="GO" id="GO:0005829">
    <property type="term" value="C:cytosol"/>
    <property type="evidence" value="ECO:0007669"/>
    <property type="project" value="TreeGrafter"/>
</dbReference>
<dbReference type="GO" id="GO:0004056">
    <property type="term" value="F:argininosuccinate lyase activity"/>
    <property type="evidence" value="ECO:0007669"/>
    <property type="project" value="UniProtKB-UniRule"/>
</dbReference>
<dbReference type="GO" id="GO:0042450">
    <property type="term" value="P:arginine biosynthetic process via ornithine"/>
    <property type="evidence" value="ECO:0007669"/>
    <property type="project" value="InterPro"/>
</dbReference>
<dbReference type="GO" id="GO:0006526">
    <property type="term" value="P:L-arginine biosynthetic process"/>
    <property type="evidence" value="ECO:0007669"/>
    <property type="project" value="UniProtKB-UniRule"/>
</dbReference>
<dbReference type="CDD" id="cd01359">
    <property type="entry name" value="Argininosuccinate_lyase"/>
    <property type="match status" value="1"/>
</dbReference>
<dbReference type="FunFam" id="1.10.275.10:FF:000002">
    <property type="entry name" value="Argininosuccinate lyase"/>
    <property type="match status" value="1"/>
</dbReference>
<dbReference type="FunFam" id="1.10.40.30:FF:000001">
    <property type="entry name" value="Argininosuccinate lyase"/>
    <property type="match status" value="1"/>
</dbReference>
<dbReference type="FunFam" id="1.20.200.10:FF:000006">
    <property type="entry name" value="Argininosuccinate lyase"/>
    <property type="match status" value="1"/>
</dbReference>
<dbReference type="Gene3D" id="1.10.40.30">
    <property type="entry name" value="Fumarase/aspartase (C-terminal domain)"/>
    <property type="match status" value="1"/>
</dbReference>
<dbReference type="Gene3D" id="1.20.200.10">
    <property type="entry name" value="Fumarase/aspartase (Central domain)"/>
    <property type="match status" value="1"/>
</dbReference>
<dbReference type="Gene3D" id="1.10.275.10">
    <property type="entry name" value="Fumarase/aspartase (N-terminal domain)"/>
    <property type="match status" value="1"/>
</dbReference>
<dbReference type="HAMAP" id="MF_00006">
    <property type="entry name" value="Arg_succ_lyase"/>
    <property type="match status" value="1"/>
</dbReference>
<dbReference type="InterPro" id="IPR029419">
    <property type="entry name" value="Arg_succ_lyase_C"/>
</dbReference>
<dbReference type="InterPro" id="IPR009049">
    <property type="entry name" value="Argininosuccinate_lyase"/>
</dbReference>
<dbReference type="InterPro" id="IPR024083">
    <property type="entry name" value="Fumarase/histidase_N"/>
</dbReference>
<dbReference type="InterPro" id="IPR020557">
    <property type="entry name" value="Fumarate_lyase_CS"/>
</dbReference>
<dbReference type="InterPro" id="IPR000362">
    <property type="entry name" value="Fumarate_lyase_fam"/>
</dbReference>
<dbReference type="InterPro" id="IPR022761">
    <property type="entry name" value="Fumarate_lyase_N"/>
</dbReference>
<dbReference type="InterPro" id="IPR008948">
    <property type="entry name" value="L-Aspartase-like"/>
</dbReference>
<dbReference type="NCBIfam" id="TIGR00838">
    <property type="entry name" value="argH"/>
    <property type="match status" value="1"/>
</dbReference>
<dbReference type="PANTHER" id="PTHR43814">
    <property type="entry name" value="ARGININOSUCCINATE LYASE"/>
    <property type="match status" value="1"/>
</dbReference>
<dbReference type="PANTHER" id="PTHR43814:SF1">
    <property type="entry name" value="ARGININOSUCCINATE LYASE"/>
    <property type="match status" value="1"/>
</dbReference>
<dbReference type="Pfam" id="PF14698">
    <property type="entry name" value="ASL_C2"/>
    <property type="match status" value="1"/>
</dbReference>
<dbReference type="Pfam" id="PF00206">
    <property type="entry name" value="Lyase_1"/>
    <property type="match status" value="1"/>
</dbReference>
<dbReference type="PRINTS" id="PR00145">
    <property type="entry name" value="ARGSUCLYASE"/>
</dbReference>
<dbReference type="PRINTS" id="PR00149">
    <property type="entry name" value="FUMRATELYASE"/>
</dbReference>
<dbReference type="SUPFAM" id="SSF48557">
    <property type="entry name" value="L-aspartase-like"/>
    <property type="match status" value="1"/>
</dbReference>
<dbReference type="PROSITE" id="PS00163">
    <property type="entry name" value="FUMARATE_LYASES"/>
    <property type="match status" value="1"/>
</dbReference>
<organism>
    <name type="scientific">Bacillus velezensis (strain DSM 23117 / BGSC 10A6 / LMG 26770 / FZB42)</name>
    <name type="common">Bacillus amyloliquefaciens subsp. plantarum</name>
    <dbReference type="NCBI Taxonomy" id="326423"/>
    <lineage>
        <taxon>Bacteria</taxon>
        <taxon>Bacillati</taxon>
        <taxon>Bacillota</taxon>
        <taxon>Bacilli</taxon>
        <taxon>Bacillales</taxon>
        <taxon>Bacillaceae</taxon>
        <taxon>Bacillus</taxon>
        <taxon>Bacillus amyloliquefaciens group</taxon>
    </lineage>
</organism>
<protein>
    <recommendedName>
        <fullName evidence="1">Argininosuccinate lyase</fullName>
        <shortName evidence="1">ASAL</shortName>
        <ecNumber evidence="1">4.3.2.1</ecNumber>
    </recommendedName>
    <alternativeName>
        <fullName evidence="1">Arginosuccinase</fullName>
    </alternativeName>
</protein>
<accession>A7Z7L9</accession>
<comment type="catalytic activity">
    <reaction evidence="1">
        <text>2-(N(omega)-L-arginino)succinate = fumarate + L-arginine</text>
        <dbReference type="Rhea" id="RHEA:24020"/>
        <dbReference type="ChEBI" id="CHEBI:29806"/>
        <dbReference type="ChEBI" id="CHEBI:32682"/>
        <dbReference type="ChEBI" id="CHEBI:57472"/>
        <dbReference type="EC" id="4.3.2.1"/>
    </reaction>
</comment>
<comment type="pathway">
    <text evidence="1">Amino-acid biosynthesis; L-arginine biosynthesis; L-arginine from L-ornithine and carbamoyl phosphate: step 3/3.</text>
</comment>
<comment type="subcellular location">
    <subcellularLocation>
        <location evidence="1">Cytoplasm</location>
    </subcellularLocation>
</comment>
<comment type="similarity">
    <text evidence="1">Belongs to the lyase 1 family. Argininosuccinate lyase subfamily.</text>
</comment>
<gene>
    <name evidence="1" type="primary">argH</name>
    <name type="ordered locus">RBAM_026370</name>
</gene>
<sequence length="458" mass="51726">MKKLWGGRFQKTPEKWVDEFGASITFDQNLVKEDITGSLAHAAMLKKCGILTEEEEGAIRQGLQTLLQKAEEGTLEFSVDYEDIHLNIEKMLIEEIGPLGGKLHTGRSRNDQVATDMHLYLKDHVSHIIVLIEQFQKALIEKAEANVETILPGYTHLQRAQPISFAHHLLAYFWMLERDKERFRDAMKRINISPLGCGALAGTTFPIDRNYSAELLGFDSIYENSLDGVSDRDFILEFLSGSSMLMMHLSRLSEEIILWCSQEFRFIELDDTYATGSSMMPQKKNPDMAELIRGKTGRVYGDMMGLFTIMKGLPLAYNKDLQEDKEGMFDTVKTVEGSLQIFTGMIETMKVNKDIMKQATKQDFSNATELADYLAKKGMPFREAHEVVGKLVYSCIEKGIYLSDMAFEEFLQASSLFEEDIYTVLDPHHAVEKRMSAGGTGFQQVEQALVKAKACAGI</sequence>